<reference key="1">
    <citation type="journal article" date="2005" name="Genes Chromosomes Cancer">
        <title>Molecular cloning and characterization of FBXO47, a novel gene containing an F-box domain, located in the 17q12 band deleted in papillary renal cell carcinoma.</title>
        <authorList>
            <person name="Simon-Kayser B."/>
            <person name="Scoul C."/>
            <person name="Renaudin K."/>
            <person name="Jezequel P."/>
            <person name="Bouchot O."/>
            <person name="Rigaud J."/>
            <person name="Bezieau S."/>
        </authorList>
    </citation>
    <scope>NUCLEOTIDE SEQUENCE [MRNA]</scope>
    <scope>TISSUE SPECIFICITY</scope>
    <scope>VARIANT ARG-209</scope>
    <source>
        <tissue>Testis</tissue>
    </source>
</reference>
<reference key="2">
    <citation type="journal article" date="2006" name="Nature">
        <title>DNA sequence of human chromosome 17 and analysis of rearrangement in the human lineage.</title>
        <authorList>
            <person name="Zody M.C."/>
            <person name="Garber M."/>
            <person name="Adams D.J."/>
            <person name="Sharpe T."/>
            <person name="Harrow J."/>
            <person name="Lupski J.R."/>
            <person name="Nicholson C."/>
            <person name="Searle S.M."/>
            <person name="Wilming L."/>
            <person name="Young S.K."/>
            <person name="Abouelleil A."/>
            <person name="Allen N.R."/>
            <person name="Bi W."/>
            <person name="Bloom T."/>
            <person name="Borowsky M.L."/>
            <person name="Bugalter B.E."/>
            <person name="Butler J."/>
            <person name="Chang J.L."/>
            <person name="Chen C.-K."/>
            <person name="Cook A."/>
            <person name="Corum B."/>
            <person name="Cuomo C.A."/>
            <person name="de Jong P.J."/>
            <person name="DeCaprio D."/>
            <person name="Dewar K."/>
            <person name="FitzGerald M."/>
            <person name="Gilbert J."/>
            <person name="Gibson R."/>
            <person name="Gnerre S."/>
            <person name="Goldstein S."/>
            <person name="Grafham D.V."/>
            <person name="Grocock R."/>
            <person name="Hafez N."/>
            <person name="Hagopian D.S."/>
            <person name="Hart E."/>
            <person name="Norman C.H."/>
            <person name="Humphray S."/>
            <person name="Jaffe D.B."/>
            <person name="Jones M."/>
            <person name="Kamal M."/>
            <person name="Khodiyar V.K."/>
            <person name="LaButti K."/>
            <person name="Laird G."/>
            <person name="Lehoczky J."/>
            <person name="Liu X."/>
            <person name="Lokyitsang T."/>
            <person name="Loveland J."/>
            <person name="Lui A."/>
            <person name="Macdonald P."/>
            <person name="Major J.E."/>
            <person name="Matthews L."/>
            <person name="Mauceli E."/>
            <person name="McCarroll S.A."/>
            <person name="Mihalev A.H."/>
            <person name="Mudge J."/>
            <person name="Nguyen C."/>
            <person name="Nicol R."/>
            <person name="O'Leary S.B."/>
            <person name="Osoegawa K."/>
            <person name="Schwartz D.C."/>
            <person name="Shaw-Smith C."/>
            <person name="Stankiewicz P."/>
            <person name="Steward C."/>
            <person name="Swarbreck D."/>
            <person name="Venkataraman V."/>
            <person name="Whittaker C.A."/>
            <person name="Yang X."/>
            <person name="Zimmer A.R."/>
            <person name="Bradley A."/>
            <person name="Hubbard T."/>
            <person name="Birren B.W."/>
            <person name="Rogers J."/>
            <person name="Lander E.S."/>
            <person name="Nusbaum C."/>
        </authorList>
    </citation>
    <scope>NUCLEOTIDE SEQUENCE [LARGE SCALE GENOMIC DNA]</scope>
</reference>
<reference key="3">
    <citation type="journal article" date="2004" name="Genome Res.">
        <title>The status, quality, and expansion of the NIH full-length cDNA project: the Mammalian Gene Collection (MGC).</title>
        <authorList>
            <consortium name="The MGC Project Team"/>
        </authorList>
    </citation>
    <scope>NUCLEOTIDE SEQUENCE [LARGE SCALE MRNA]</scope>
    <scope>VARIANT ARG-209</scope>
</reference>
<reference key="4">
    <citation type="journal article" date="2018" name="Mol. Psychiatry">
        <title>Mapping autosomal recessive intellectual disability: combined microarray and exome sequencing identifies 26 novel candidate genes in 192 consanguineous families.</title>
        <authorList>
            <person name="Harripaul R."/>
            <person name="Vasli N."/>
            <person name="Mikhailov A."/>
            <person name="Rafiq M.A."/>
            <person name="Mittal K."/>
            <person name="Windpassinger C."/>
            <person name="Sheikh T.I."/>
            <person name="Noor A."/>
            <person name="Mahmood H."/>
            <person name="Downey S."/>
            <person name="Johnson M."/>
            <person name="Vleuten K."/>
            <person name="Bell L."/>
            <person name="Ilyas M."/>
            <person name="Khan F.S."/>
            <person name="Khan V."/>
            <person name="Moradi M."/>
            <person name="Ayaz M."/>
            <person name="Naeem F."/>
            <person name="Heidari A."/>
            <person name="Ahmed I."/>
            <person name="Ghadami S."/>
            <person name="Agha Z."/>
            <person name="Zeinali S."/>
            <person name="Qamar R."/>
            <person name="Mozhdehipanah H."/>
            <person name="John P."/>
            <person name="Mir A."/>
            <person name="Ansar M."/>
            <person name="French L."/>
            <person name="Ayub M."/>
            <person name="Vincent J.B."/>
        </authorList>
    </citation>
    <scope>VARIANT GLY-182</scope>
</reference>
<feature type="chain" id="PRO_0000119952" description="F-box only protein 47">
    <location>
        <begin position="1"/>
        <end position="452"/>
    </location>
</feature>
<feature type="domain" description="F-box" evidence="2">
    <location>
        <begin position="41"/>
        <end position="91"/>
    </location>
</feature>
<feature type="sequence variant" id="VAR_080770" description="Found in a consanguineous family with intellectual disability; uncertain significance; dbSNP:rs759147995." evidence="5">
    <original>R</original>
    <variation>G</variation>
    <location>
        <position position="182"/>
    </location>
</feature>
<feature type="sequence variant" id="VAR_049052" description="In dbSNP:rs9906595." evidence="3 4">
    <original>Q</original>
    <variation>R</variation>
    <location>
        <position position="209"/>
    </location>
</feature>
<comment type="function">
    <text evidence="1">Probably recognizes and binds to some phosphorylated proteins and promotes their ubiquitination and degradation.</text>
</comment>
<comment type="subunit">
    <text evidence="1">Part of a SCF (SKP1-cullin-F-box) protein ligase complex.</text>
</comment>
<comment type="tissue specificity">
    <text evidence="4">Widely expressed, with highest levels in kidney, liver and pancreas. Down-regulated in tumors.</text>
</comment>
<accession>Q5MNV8</accession>
<accession>B2RTZ4</accession>
<gene>
    <name evidence="6 7" type="primary">FBXO47</name>
</gene>
<name>FBX47_HUMAN</name>
<keyword id="KW-1185">Reference proteome</keyword>
<keyword id="KW-0833">Ubl conjugation pathway</keyword>
<protein>
    <recommendedName>
        <fullName>F-box only protein 47</fullName>
    </recommendedName>
</protein>
<proteinExistence type="evidence at transcript level"/>
<sequence length="452" mass="51968">MASRINTNFTLIPNQKLRRSNRQTSCYSKTLGSGFQPISTFGNFKALPLEIFQIILKYLSVKDISMLSMVSKTVSQHIINYISTSSGSKRLLLQDFHNLELPDRRQDSAILEHYRSLGLLFKRCTLLLPTKERLKYIHKILTEVSCFKFNGCAAPMQCLGLTCYGMFLQTLTAGWDELECHRVYNFLCELTNLCRKIQMAVCSKPGSAQKLELRIRLFCRNVLLDHWTHRSDSAFWLTRILKPWPMVNQARLLYIIFGPISPQDGQVVWQEMIEEPTDEFSLKGLADAIKLLYDASTKEWTADDVISLVDELSVVPREWLLENNARLLMLSGNNICFSFMASKAVNGRTIELARLVVFLALVCEKELYCMDWTVKMMQKVCKVFSTPVERKNFLQNVANAFACVIMEMLQSIMSGDRDEDDRSFLNLFHLVHAQANFHKEVLYLTMNTPLST</sequence>
<dbReference type="EMBL" id="AY700575">
    <property type="protein sequence ID" value="AAV91324.1"/>
    <property type="molecule type" value="mRNA"/>
</dbReference>
<dbReference type="EMBL" id="AC006441">
    <property type="status" value="NOT_ANNOTATED_CDS"/>
    <property type="molecule type" value="Genomic_DNA"/>
</dbReference>
<dbReference type="EMBL" id="BC140879">
    <property type="protein sequence ID" value="AAI40880.1"/>
    <property type="molecule type" value="mRNA"/>
</dbReference>
<dbReference type="EMBL" id="BC140880">
    <property type="protein sequence ID" value="AAI40881.1"/>
    <property type="molecule type" value="mRNA"/>
</dbReference>
<dbReference type="CCDS" id="CCDS32639.1"/>
<dbReference type="RefSeq" id="NP_001008777.2">
    <property type="nucleotide sequence ID" value="NM_001008777.3"/>
</dbReference>
<dbReference type="BioGRID" id="138947">
    <property type="interactions" value="2"/>
</dbReference>
<dbReference type="ComplexPortal" id="CPX-8006">
    <property type="entry name" value="SCF E3 ubiquitin ligase complex, FBXO47 variant"/>
</dbReference>
<dbReference type="FunCoup" id="Q5MNV8">
    <property type="interactions" value="67"/>
</dbReference>
<dbReference type="STRING" id="9606.ENSP00000367319"/>
<dbReference type="GlyGen" id="Q5MNV8">
    <property type="glycosylation" value="1 site, 1 O-linked glycan (1 site)"/>
</dbReference>
<dbReference type="iPTMnet" id="Q5MNV8"/>
<dbReference type="PhosphoSitePlus" id="Q5MNV8"/>
<dbReference type="BioMuta" id="FBXO47"/>
<dbReference type="DMDM" id="296434512"/>
<dbReference type="jPOST" id="Q5MNV8"/>
<dbReference type="PaxDb" id="9606-ENSP00000367319"/>
<dbReference type="ProteomicsDB" id="63588"/>
<dbReference type="Antibodypedia" id="65659">
    <property type="antibodies" value="61 antibodies from 13 providers"/>
</dbReference>
<dbReference type="DNASU" id="494188"/>
<dbReference type="Ensembl" id="ENST00000378079.3">
    <property type="protein sequence ID" value="ENSP00000367319.2"/>
    <property type="gene ID" value="ENSG00000204952.3"/>
</dbReference>
<dbReference type="GeneID" id="494188"/>
<dbReference type="KEGG" id="hsa:494188"/>
<dbReference type="MANE-Select" id="ENST00000378079.3">
    <property type="protein sequence ID" value="ENSP00000367319.2"/>
    <property type="RefSeq nucleotide sequence ID" value="NM_001008777.3"/>
    <property type="RefSeq protein sequence ID" value="NP_001008777.2"/>
</dbReference>
<dbReference type="UCSC" id="uc002hrc.2">
    <property type="organism name" value="human"/>
</dbReference>
<dbReference type="AGR" id="HGNC:31969"/>
<dbReference type="CTD" id="494188"/>
<dbReference type="DisGeNET" id="494188"/>
<dbReference type="GeneCards" id="FBXO47"/>
<dbReference type="HGNC" id="HGNC:31969">
    <property type="gene designation" value="FBXO47"/>
</dbReference>
<dbReference type="HPA" id="ENSG00000204952">
    <property type="expression patterns" value="Tissue enriched (testis)"/>
</dbReference>
<dbReference type="MIM" id="609498">
    <property type="type" value="gene"/>
</dbReference>
<dbReference type="neXtProt" id="NX_Q5MNV8"/>
<dbReference type="OpenTargets" id="ENSG00000204952"/>
<dbReference type="PharmGKB" id="PA162388157"/>
<dbReference type="VEuPathDB" id="HostDB:ENSG00000204952"/>
<dbReference type="eggNOG" id="ENOG502QV8T">
    <property type="taxonomic scope" value="Eukaryota"/>
</dbReference>
<dbReference type="GeneTree" id="ENSGT00390000014175"/>
<dbReference type="HOGENOM" id="CLU_048746_0_0_1"/>
<dbReference type="InParanoid" id="Q5MNV8"/>
<dbReference type="OMA" id="AFACVTM"/>
<dbReference type="OrthoDB" id="6346810at2759"/>
<dbReference type="PAN-GO" id="Q5MNV8">
    <property type="GO annotations" value="0 GO annotations based on evolutionary models"/>
</dbReference>
<dbReference type="PhylomeDB" id="Q5MNV8"/>
<dbReference type="TreeFam" id="TF343134"/>
<dbReference type="PathwayCommons" id="Q5MNV8"/>
<dbReference type="BioGRID-ORCS" id="494188">
    <property type="hits" value="32 hits in 1182 CRISPR screens"/>
</dbReference>
<dbReference type="ChiTaRS" id="FBXO47">
    <property type="organism name" value="human"/>
</dbReference>
<dbReference type="GenomeRNAi" id="494188"/>
<dbReference type="Pharos" id="Q5MNV8">
    <property type="development level" value="Tbio"/>
</dbReference>
<dbReference type="PRO" id="PR:Q5MNV8"/>
<dbReference type="Proteomes" id="UP000005640">
    <property type="component" value="Chromosome 17"/>
</dbReference>
<dbReference type="RNAct" id="Q5MNV8">
    <property type="molecule type" value="protein"/>
</dbReference>
<dbReference type="Bgee" id="ENSG00000204952">
    <property type="expression patterns" value="Expressed in male germ line stem cell (sensu Vertebrata) in testis and 3 other cell types or tissues"/>
</dbReference>
<dbReference type="CDD" id="cd22112">
    <property type="entry name" value="F-box_FBXO47"/>
    <property type="match status" value="1"/>
</dbReference>
<dbReference type="InterPro" id="IPR056622">
    <property type="entry name" value="ARM_FBXO47"/>
</dbReference>
<dbReference type="InterPro" id="IPR036047">
    <property type="entry name" value="F-box-like_dom_sf"/>
</dbReference>
<dbReference type="InterPro" id="IPR001810">
    <property type="entry name" value="F-box_dom"/>
</dbReference>
<dbReference type="InterPro" id="IPR038946">
    <property type="entry name" value="FBXO47"/>
</dbReference>
<dbReference type="PANTHER" id="PTHR34098">
    <property type="entry name" value="F-BOX ONLY PROTEIN 47"/>
    <property type="match status" value="1"/>
</dbReference>
<dbReference type="PANTHER" id="PTHR34098:SF1">
    <property type="entry name" value="F-BOX ONLY PROTEIN 47"/>
    <property type="match status" value="1"/>
</dbReference>
<dbReference type="Pfam" id="PF24467">
    <property type="entry name" value="ARM_FBXO47"/>
    <property type="match status" value="1"/>
</dbReference>
<dbReference type="Pfam" id="PF00646">
    <property type="entry name" value="F-box"/>
    <property type="match status" value="1"/>
</dbReference>
<dbReference type="SUPFAM" id="SSF81383">
    <property type="entry name" value="F-box domain"/>
    <property type="match status" value="1"/>
</dbReference>
<dbReference type="PROSITE" id="PS50181">
    <property type="entry name" value="FBOX"/>
    <property type="match status" value="1"/>
</dbReference>
<organism>
    <name type="scientific">Homo sapiens</name>
    <name type="common">Human</name>
    <dbReference type="NCBI Taxonomy" id="9606"/>
    <lineage>
        <taxon>Eukaryota</taxon>
        <taxon>Metazoa</taxon>
        <taxon>Chordata</taxon>
        <taxon>Craniata</taxon>
        <taxon>Vertebrata</taxon>
        <taxon>Euteleostomi</taxon>
        <taxon>Mammalia</taxon>
        <taxon>Eutheria</taxon>
        <taxon>Euarchontoglires</taxon>
        <taxon>Primates</taxon>
        <taxon>Haplorrhini</taxon>
        <taxon>Catarrhini</taxon>
        <taxon>Hominidae</taxon>
        <taxon>Homo</taxon>
    </lineage>
</organism>
<evidence type="ECO:0000250" key="1"/>
<evidence type="ECO:0000255" key="2">
    <source>
        <dbReference type="PROSITE-ProRule" id="PRU00080"/>
    </source>
</evidence>
<evidence type="ECO:0000269" key="3">
    <source>
    </source>
</evidence>
<evidence type="ECO:0000269" key="4">
    <source>
    </source>
</evidence>
<evidence type="ECO:0000269" key="5">
    <source>
    </source>
</evidence>
<evidence type="ECO:0000303" key="6">
    <source>
    </source>
</evidence>
<evidence type="ECO:0000312" key="7">
    <source>
        <dbReference type="HGNC" id="HGNC:31969"/>
    </source>
</evidence>